<keyword id="KW-0175">Coiled coil</keyword>
<keyword id="KW-1185">Reference proteome</keyword>
<sequence length="407" mass="43655">MSGNIAVDPDKLEQLANDVVTELTDMENKYKDLHVELGQMILQCDPRYSSCFSGVGDAWSSGKALVTKLSDNEIFIRKTGDKFVEQDDILRKLYNAYDKYGTMTSLTALMLTQGKYYGLGLTKFVKQPSGLHTAQHSKLLLDISRAVDSSRYQKAARVLLNPKYLLKKTNRPFSDLVHKKFTKYFPQDTVDFSNSVRSYTKGFLNEAGVRSTLKDVGKTGLRFAKGNAITATLITGATETFGAGVKIAENYAKYQDKPEVLKRENAKAVGNAVNNTIFVAGGATAGAVIGGAIGSFAGPVGTVLLGAAGSYIGGVVGEQIAKYTAGFAEKAALKLKEPIHAVVDTAKKGLESAGKVVKSVNDGIDAANKSIHKGIDSAKKGMEKAKKTADSLIHGATHFLKGKFSFG</sequence>
<accession>O31557</accession>
<feature type="chain" id="PRO_0000360535" description="Uncharacterized protein YfjB">
    <location>
        <begin position="1"/>
        <end position="407"/>
    </location>
</feature>
<feature type="coiled-coil region" evidence="1">
    <location>
        <begin position="10"/>
        <end position="37"/>
    </location>
</feature>
<evidence type="ECO:0000255" key="1"/>
<proteinExistence type="predicted"/>
<organism>
    <name type="scientific">Bacillus subtilis (strain 168)</name>
    <dbReference type="NCBI Taxonomy" id="224308"/>
    <lineage>
        <taxon>Bacteria</taxon>
        <taxon>Bacillati</taxon>
        <taxon>Bacillota</taxon>
        <taxon>Bacilli</taxon>
        <taxon>Bacillales</taxon>
        <taxon>Bacillaceae</taxon>
        <taxon>Bacillus</taxon>
    </lineage>
</organism>
<name>YFJB_BACSU</name>
<protein>
    <recommendedName>
        <fullName>Uncharacterized protein YfjB</fullName>
    </recommendedName>
</protein>
<dbReference type="EMBL" id="AL009126">
    <property type="protein sequence ID" value="CAB12645.1"/>
    <property type="molecule type" value="Genomic_DNA"/>
</dbReference>
<dbReference type="PIR" id="F69805">
    <property type="entry name" value="F69805"/>
</dbReference>
<dbReference type="RefSeq" id="NP_388697.1">
    <property type="nucleotide sequence ID" value="NC_000964.3"/>
</dbReference>
<dbReference type="RefSeq" id="WP_003243998.1">
    <property type="nucleotide sequence ID" value="NZ_OZ025638.1"/>
</dbReference>
<dbReference type="FunCoup" id="O31557">
    <property type="interactions" value="5"/>
</dbReference>
<dbReference type="STRING" id="224308.BSU08160"/>
<dbReference type="PaxDb" id="224308-BSU08160"/>
<dbReference type="EnsemblBacteria" id="CAB12645">
    <property type="protein sequence ID" value="CAB12645"/>
    <property type="gene ID" value="BSU_08160"/>
</dbReference>
<dbReference type="GeneID" id="939700"/>
<dbReference type="KEGG" id="bsu:BSU08160"/>
<dbReference type="PATRIC" id="fig|224308.179.peg.882"/>
<dbReference type="eggNOG" id="ENOG5031Z9T">
    <property type="taxonomic scope" value="Bacteria"/>
</dbReference>
<dbReference type="InParanoid" id="O31557"/>
<dbReference type="OrthoDB" id="2914685at2"/>
<dbReference type="BioCyc" id="BSUB:BSU08160-MONOMER"/>
<dbReference type="Proteomes" id="UP000001570">
    <property type="component" value="Chromosome"/>
</dbReference>
<gene>
    <name type="primary">yfjB</name>
    <name type="ordered locus">BSU08160</name>
</gene>
<reference key="1">
    <citation type="journal article" date="1997" name="Nature">
        <title>The complete genome sequence of the Gram-positive bacterium Bacillus subtilis.</title>
        <authorList>
            <person name="Kunst F."/>
            <person name="Ogasawara N."/>
            <person name="Moszer I."/>
            <person name="Albertini A.M."/>
            <person name="Alloni G."/>
            <person name="Azevedo V."/>
            <person name="Bertero M.G."/>
            <person name="Bessieres P."/>
            <person name="Bolotin A."/>
            <person name="Borchert S."/>
            <person name="Borriss R."/>
            <person name="Boursier L."/>
            <person name="Brans A."/>
            <person name="Braun M."/>
            <person name="Brignell S.C."/>
            <person name="Bron S."/>
            <person name="Brouillet S."/>
            <person name="Bruschi C.V."/>
            <person name="Caldwell B."/>
            <person name="Capuano V."/>
            <person name="Carter N.M."/>
            <person name="Choi S.-K."/>
            <person name="Codani J.-J."/>
            <person name="Connerton I.F."/>
            <person name="Cummings N.J."/>
            <person name="Daniel R.A."/>
            <person name="Denizot F."/>
            <person name="Devine K.M."/>
            <person name="Duesterhoeft A."/>
            <person name="Ehrlich S.D."/>
            <person name="Emmerson P.T."/>
            <person name="Entian K.-D."/>
            <person name="Errington J."/>
            <person name="Fabret C."/>
            <person name="Ferrari E."/>
            <person name="Foulger D."/>
            <person name="Fritz C."/>
            <person name="Fujita M."/>
            <person name="Fujita Y."/>
            <person name="Fuma S."/>
            <person name="Galizzi A."/>
            <person name="Galleron N."/>
            <person name="Ghim S.-Y."/>
            <person name="Glaser P."/>
            <person name="Goffeau A."/>
            <person name="Golightly E.J."/>
            <person name="Grandi G."/>
            <person name="Guiseppi G."/>
            <person name="Guy B.J."/>
            <person name="Haga K."/>
            <person name="Haiech J."/>
            <person name="Harwood C.R."/>
            <person name="Henaut A."/>
            <person name="Hilbert H."/>
            <person name="Holsappel S."/>
            <person name="Hosono S."/>
            <person name="Hullo M.-F."/>
            <person name="Itaya M."/>
            <person name="Jones L.-M."/>
            <person name="Joris B."/>
            <person name="Karamata D."/>
            <person name="Kasahara Y."/>
            <person name="Klaerr-Blanchard M."/>
            <person name="Klein C."/>
            <person name="Kobayashi Y."/>
            <person name="Koetter P."/>
            <person name="Koningstein G."/>
            <person name="Krogh S."/>
            <person name="Kumano M."/>
            <person name="Kurita K."/>
            <person name="Lapidus A."/>
            <person name="Lardinois S."/>
            <person name="Lauber J."/>
            <person name="Lazarevic V."/>
            <person name="Lee S.-M."/>
            <person name="Levine A."/>
            <person name="Liu H."/>
            <person name="Masuda S."/>
            <person name="Mauel C."/>
            <person name="Medigue C."/>
            <person name="Medina N."/>
            <person name="Mellado R.P."/>
            <person name="Mizuno M."/>
            <person name="Moestl D."/>
            <person name="Nakai S."/>
            <person name="Noback M."/>
            <person name="Noone D."/>
            <person name="O'Reilly M."/>
            <person name="Ogawa K."/>
            <person name="Ogiwara A."/>
            <person name="Oudega B."/>
            <person name="Park S.-H."/>
            <person name="Parro V."/>
            <person name="Pohl T.M."/>
            <person name="Portetelle D."/>
            <person name="Porwollik S."/>
            <person name="Prescott A.M."/>
            <person name="Presecan E."/>
            <person name="Pujic P."/>
            <person name="Purnelle B."/>
            <person name="Rapoport G."/>
            <person name="Rey M."/>
            <person name="Reynolds S."/>
            <person name="Rieger M."/>
            <person name="Rivolta C."/>
            <person name="Rocha E."/>
            <person name="Roche B."/>
            <person name="Rose M."/>
            <person name="Sadaie Y."/>
            <person name="Sato T."/>
            <person name="Scanlan E."/>
            <person name="Schleich S."/>
            <person name="Schroeter R."/>
            <person name="Scoffone F."/>
            <person name="Sekiguchi J."/>
            <person name="Sekowska A."/>
            <person name="Seror S.J."/>
            <person name="Serror P."/>
            <person name="Shin B.-S."/>
            <person name="Soldo B."/>
            <person name="Sorokin A."/>
            <person name="Tacconi E."/>
            <person name="Takagi T."/>
            <person name="Takahashi H."/>
            <person name="Takemaru K."/>
            <person name="Takeuchi M."/>
            <person name="Tamakoshi A."/>
            <person name="Tanaka T."/>
            <person name="Terpstra P."/>
            <person name="Tognoni A."/>
            <person name="Tosato V."/>
            <person name="Uchiyama S."/>
            <person name="Vandenbol M."/>
            <person name="Vannier F."/>
            <person name="Vassarotti A."/>
            <person name="Viari A."/>
            <person name="Wambutt R."/>
            <person name="Wedler E."/>
            <person name="Wedler H."/>
            <person name="Weitzenegger T."/>
            <person name="Winters P."/>
            <person name="Wipat A."/>
            <person name="Yamamoto H."/>
            <person name="Yamane K."/>
            <person name="Yasumoto K."/>
            <person name="Yata K."/>
            <person name="Yoshida K."/>
            <person name="Yoshikawa H.-F."/>
            <person name="Zumstein E."/>
            <person name="Yoshikawa H."/>
            <person name="Danchin A."/>
        </authorList>
    </citation>
    <scope>NUCLEOTIDE SEQUENCE [LARGE SCALE GENOMIC DNA]</scope>
    <source>
        <strain>168</strain>
    </source>
</reference>